<feature type="chain" id="PRO_0000207763" description="Photosystem I reaction center subunit XII">
    <location>
        <begin position="1"/>
        <end position="29"/>
    </location>
</feature>
<feature type="transmembrane region" description="Helical" evidence="1">
    <location>
        <begin position="7"/>
        <end position="26"/>
    </location>
</feature>
<accession>O78448</accession>
<gene>
    <name evidence="1" type="primary">psaM</name>
</gene>
<protein>
    <recommendedName>
        <fullName evidence="1">Photosystem I reaction center subunit XII</fullName>
    </recommendedName>
    <alternativeName>
        <fullName evidence="1">PSI-M</fullName>
    </alternativeName>
</protein>
<evidence type="ECO:0000255" key="1">
    <source>
        <dbReference type="HAMAP-Rule" id="MF_00828"/>
    </source>
</evidence>
<keyword id="KW-0150">Chloroplast</keyword>
<keyword id="KW-0472">Membrane</keyword>
<keyword id="KW-0602">Photosynthesis</keyword>
<keyword id="KW-0603">Photosystem I</keyword>
<keyword id="KW-0934">Plastid</keyword>
<keyword id="KW-0793">Thylakoid</keyword>
<keyword id="KW-0812">Transmembrane</keyword>
<keyword id="KW-1133">Transmembrane helix</keyword>
<organism>
    <name type="scientific">Guillardia theta</name>
    <name type="common">Cryptophyte</name>
    <name type="synonym">Cryptomonas phi</name>
    <dbReference type="NCBI Taxonomy" id="55529"/>
    <lineage>
        <taxon>Eukaryota</taxon>
        <taxon>Cryptophyceae</taxon>
        <taxon>Pyrenomonadales</taxon>
        <taxon>Geminigeraceae</taxon>
        <taxon>Guillardia</taxon>
    </lineage>
</organism>
<dbReference type="EMBL" id="AF041468">
    <property type="protein sequence ID" value="AAC35635.1"/>
    <property type="molecule type" value="Genomic_DNA"/>
</dbReference>
<dbReference type="RefSeq" id="NP_050701.1">
    <property type="nucleotide sequence ID" value="NC_000926.1"/>
</dbReference>
<dbReference type="SMR" id="O78448"/>
<dbReference type="GeneID" id="856997"/>
<dbReference type="HOGENOM" id="CLU_215773_0_3_1"/>
<dbReference type="GO" id="GO:0009535">
    <property type="term" value="C:chloroplast thylakoid membrane"/>
    <property type="evidence" value="ECO:0007669"/>
    <property type="project" value="UniProtKB-SubCell"/>
</dbReference>
<dbReference type="GO" id="GO:0009522">
    <property type="term" value="C:photosystem I"/>
    <property type="evidence" value="ECO:0007669"/>
    <property type="project" value="UniProtKB-KW"/>
</dbReference>
<dbReference type="GO" id="GO:0015979">
    <property type="term" value="P:photosynthesis"/>
    <property type="evidence" value="ECO:0007669"/>
    <property type="project" value="UniProtKB-UniRule"/>
</dbReference>
<dbReference type="HAMAP" id="MF_00828">
    <property type="entry name" value="PSI_PsaM"/>
    <property type="match status" value="1"/>
</dbReference>
<dbReference type="InterPro" id="IPR010010">
    <property type="entry name" value="PSI_PsaM"/>
</dbReference>
<dbReference type="InterPro" id="IPR037279">
    <property type="entry name" value="PSI_PsaM_sf"/>
</dbReference>
<dbReference type="NCBIfam" id="TIGR03053">
    <property type="entry name" value="PS_I_psaM"/>
    <property type="match status" value="1"/>
</dbReference>
<dbReference type="Pfam" id="PF07465">
    <property type="entry name" value="PsaM"/>
    <property type="match status" value="1"/>
</dbReference>
<dbReference type="SUPFAM" id="SSF81548">
    <property type="entry name" value="Subunit XII of photosystem I reaction centre, PsaM"/>
    <property type="match status" value="1"/>
</dbReference>
<sequence>MISDTQIFVALILALFSFVLAIRLGTSLY</sequence>
<name>PSAM_GUITH</name>
<reference key="1">
    <citation type="journal article" date="1999" name="J. Mol. Evol.">
        <title>The plastid genome of the cryptophyte alga, Guillardia theta: complete sequence and conserved synteny groups confirm its common ancestry with red algae.</title>
        <authorList>
            <person name="Douglas S.E."/>
            <person name="Penny S.L."/>
        </authorList>
    </citation>
    <scope>NUCLEOTIDE SEQUENCE [LARGE SCALE GENOMIC DNA]</scope>
</reference>
<comment type="subcellular location">
    <subcellularLocation>
        <location evidence="1">Plastid</location>
        <location evidence="1">Chloroplast thylakoid membrane</location>
        <topology evidence="1">Single-pass membrane protein</topology>
    </subcellularLocation>
</comment>
<comment type="similarity">
    <text evidence="1">Belongs to the PsaM family.</text>
</comment>
<proteinExistence type="inferred from homology"/>
<geneLocation type="chloroplast"/>